<feature type="chain" id="PRO_0000385494" description="Tegument protein UL47 homolog">
    <location>
        <begin position="1"/>
        <end position="804"/>
    </location>
</feature>
<feature type="repeat" description="1-1">
    <location>
        <begin position="117"/>
        <end position="132"/>
    </location>
</feature>
<feature type="repeat" description="1-2">
    <location>
        <begin position="133"/>
        <end position="148"/>
    </location>
</feature>
<feature type="repeat" description="1-3">
    <location>
        <begin position="149"/>
        <end position="164"/>
    </location>
</feature>
<feature type="repeat" description="1-4; truncated">
    <location>
        <begin position="170"/>
        <end position="180"/>
    </location>
</feature>
<feature type="repeat" description="1-5; truncated">
    <location>
        <begin position="181"/>
        <end position="191"/>
    </location>
</feature>
<feature type="repeat" description="1-6; truncated">
    <location>
        <begin position="192"/>
        <end position="203"/>
    </location>
</feature>
<feature type="region of interest" description="Disordered" evidence="4">
    <location>
        <begin position="1"/>
        <end position="42"/>
    </location>
</feature>
<feature type="region of interest" description="Disordered" evidence="4">
    <location>
        <begin position="58"/>
        <end position="206"/>
    </location>
</feature>
<feature type="region of interest" description="6 X 16 AA approximate tandem repeats">
    <location>
        <begin position="117"/>
        <end position="203"/>
    </location>
</feature>
<feature type="short sequence motif" description="Nuclear localization signal" evidence="3">
    <location>
        <begin position="11"/>
        <end position="31"/>
    </location>
</feature>
<feature type="short sequence motif" description="Nuclear export signal" evidence="1">
    <location>
        <begin position="770"/>
        <end position="792"/>
    </location>
</feature>
<feature type="compositionally biased region" description="Basic residues" evidence="4">
    <location>
        <begin position="1"/>
        <end position="15"/>
    </location>
</feature>
<feature type="compositionally biased region" description="Polar residues" evidence="4">
    <location>
        <begin position="32"/>
        <end position="42"/>
    </location>
</feature>
<feature type="compositionally biased region" description="Acidic residues" evidence="4">
    <location>
        <begin position="62"/>
        <end position="72"/>
    </location>
</feature>
<feature type="compositionally biased region" description="Polar residues" evidence="4">
    <location>
        <begin position="82"/>
        <end position="93"/>
    </location>
</feature>
<feature type="compositionally biased region" description="Basic and acidic residues" evidence="4">
    <location>
        <begin position="94"/>
        <end position="109"/>
    </location>
</feature>
<feature type="compositionally biased region" description="Acidic residues" evidence="4">
    <location>
        <begin position="118"/>
        <end position="204"/>
    </location>
</feature>
<feature type="sequence variant" description="In strain: Isolate Human/Japan/P-Oka/1970.">
    <location>
        <begin position="177"/>
        <end position="187"/>
    </location>
</feature>
<evidence type="ECO:0000250" key="1"/>
<evidence type="ECO:0000250" key="2">
    <source>
        <dbReference type="UniProtKB" id="P10231"/>
    </source>
</evidence>
<evidence type="ECO:0000255" key="3"/>
<evidence type="ECO:0000256" key="4">
    <source>
        <dbReference type="SAM" id="MobiDB-lite"/>
    </source>
</evidence>
<evidence type="ECO:0000305" key="5"/>
<organism>
    <name type="scientific">Varicella-zoster virus (strain Oka vaccine)</name>
    <name type="common">HHV-3</name>
    <name type="synonym">Human herpesvirus 3</name>
    <dbReference type="NCBI Taxonomy" id="341980"/>
    <lineage>
        <taxon>Viruses</taxon>
        <taxon>Duplodnaviria</taxon>
        <taxon>Heunggongvirae</taxon>
        <taxon>Peploviricota</taxon>
        <taxon>Herviviricetes</taxon>
        <taxon>Herpesvirales</taxon>
        <taxon>Orthoherpesviridae</taxon>
        <taxon>Alphaherpesvirinae</taxon>
        <taxon>Varicellovirus</taxon>
        <taxon>Varicellovirus humanalpha3</taxon>
        <taxon>Human herpesvirus 3</taxon>
    </lineage>
</organism>
<keyword id="KW-1035">Host cytoplasm</keyword>
<keyword id="KW-1048">Host nucleus</keyword>
<keyword id="KW-0426">Late protein</keyword>
<keyword id="KW-0677">Repeat</keyword>
<keyword id="KW-0694">RNA-binding</keyword>
<keyword id="KW-0804">Transcription</keyword>
<keyword id="KW-0805">Transcription regulation</keyword>
<keyword id="KW-0946">Virion</keyword>
<keyword id="KW-0920">Virion tegument</keyword>
<reference key="1">
    <citation type="journal article" date="2002" name="J. Virol.">
        <title>Comparison of the complete DNA sequences of the Oka varicella vaccine and its parental virus.</title>
        <authorList>
            <person name="Gomi Y."/>
            <person name="Sunamachi H."/>
            <person name="Mori Y."/>
            <person name="Nagaike K."/>
            <person name="Takahashi M."/>
            <person name="Yamanishi K."/>
        </authorList>
    </citation>
    <scope>NUCLEOTIDE SEQUENCE [LARGE SCALE GENOMIC DNA]</scope>
    <source>
        <strain>Isolate Human/Japan/P-Oka/1970</strain>
        <strain>Oka varicella vaccine Biken (V-Oka-Biken)</strain>
    </source>
</reference>
<reference key="2">
    <citation type="journal article" date="2008" name="J. Virol.">
        <title>Complete DNA sequences of two oka strain varicella-zoster virus genomes.</title>
        <authorList>
            <person name="Tillieux S.L."/>
            <person name="Halsey W.S."/>
            <person name="Thomas E.S."/>
            <person name="Voycik J.J."/>
            <person name="Sathe G.M."/>
            <person name="Vassilev V."/>
        </authorList>
    </citation>
    <scope>NUCLEOTIDE SEQUENCE [LARGE SCALE GENOMIC DNA]</scope>
    <source>
        <strain>Oka varicella vaccine VarilRix (V-Oka-GSK)</strain>
        <strain>Oka varicella vaccine Varivax (V-Oka-Merck)</strain>
    </source>
</reference>
<name>TEG5_VZVO</name>
<gene>
    <name type="ORF">ORF11</name>
</gene>
<protein>
    <recommendedName>
        <fullName>Tegument protein UL47 homolog</fullName>
    </recommendedName>
</protein>
<accession>Q4JQW4</accession>
<organismHost>
    <name type="scientific">Homo sapiens</name>
    <name type="common">Human</name>
    <dbReference type="NCBI Taxonomy" id="9606"/>
</organismHost>
<proteinExistence type="inferred from homology"/>
<sequence>MQSGHYNRRQSRRQRISSNTTDSPRHTHGTRYRSTNWYTHPPQILSNSETLVAVQELLNSEMDQDSSSDASDDFPGYALHHSTYNGSEQNTSTSRHENRIFKLTEREANEEININTDAIDDEGEAEEGEAEEDAIDDEGEAEEGEAEEDAIDDEGEAEEGEAEEDAAEEDAIDDEGEAEEDAIDDEGEAEEDAIDDEGEAEEDYFSVSQVCSRDADEVYFTLDPEISYSTDLRIAKVMEPAVSKELNVSKRCVEPVTLTGSMLAHNGFDESWFAMRECTRREYITVQGLYDPIHLRYQFDTSRMTPPQILRTIPALPNMTLGELLLIFPIEFMAQPISIERILVEDVFLDRRASSKTHKYGPRWNSVYALPYNAGKMYVQHIPGFYDVSLRAVGQGTAIWHHMILSTAACAISNRISHGDGLGFLLDAAIRISANCIFLGRNDNFGVGDPCWLEDHLAGLPREAVPDVLQVTQLVLPNRGPTVAIMRGFFGALAYWPELRIAISEPSTSLVRYATGHMELAEWFLFSRTHSLKPQFTPTEREMLASFFTLYVTLGGGMLNWICRATAMYLAAPYHSRSAYIAVCESLPYYYIPVNSDLLCDLEVLLLGEVDLPTVCESYATIAHELTGYEAVRTAATNFMIEFADCYKESETDLMVSAYLGAVLLLQRVLGHANLLLLLLSGAALYGGCSIYIPRGILDAYNTLMLAASPLYAHQTLTSFWKDRDDAMQTLGIRPTTDVLPKEQDRIVQASPIEMNFRFVGLETIYPREQPIPSVDLAENLMQYRNEILGLDWKSVAMHLLRKY</sequence>
<comment type="function">
    <text evidence="2">Tegument protein that can bind to various RNA transcripts. Plays a role in the attenuation of selective viral and cellular mRNA degradation by modulating the activity of host shutoff RNase ORF17/VHS. Also plays a role in the primary envelopment of virions in the perinuclear space, probably by interacting with two nuclear egress proteins ORF24 and ORF27.</text>
</comment>
<comment type="subunit">
    <text evidence="2">Interacts with US3 kinase. Interacts with ORF24 and ORF27; these interactions seem important for efficient virion nuclear egress. Interacts with ORF17/VHS.</text>
</comment>
<comment type="subcellular location">
    <subcellularLocation>
        <location evidence="2">Virion tegument</location>
    </subcellularLocation>
    <subcellularLocation>
        <location evidence="2">Host nucleus</location>
    </subcellularLocation>
    <subcellularLocation>
        <location evidence="2">Host cytoplasm</location>
    </subcellularLocation>
    <text evidence="2">Major tegument protein of the virion. Undergoes nucleocytoplasmic shuttling during infection. Localizes to the major sites of transcription in the infected cell nucleus.</text>
</comment>
<comment type="domain">
    <text evidence="2">The nuclear export signal is CRM1-dependent.</text>
</comment>
<comment type="PTM">
    <text evidence="2">Phosphorylated by US3. This phosphorylation is required for proper nuclear localization.</text>
</comment>
<comment type="miscellaneous">
    <text evidence="1">Expressed in late in the infection.</text>
</comment>
<comment type="similarity">
    <text evidence="5">Belongs to the alphaherpesvirinae HHV-1 UL47 family.</text>
</comment>
<dbReference type="EMBL" id="AB097932">
    <property type="status" value="NOT_ANNOTATED_CDS"/>
    <property type="molecule type" value="Genomic_DNA"/>
</dbReference>
<dbReference type="EMBL" id="AB097933">
    <property type="status" value="NOT_ANNOTATED_CDS"/>
    <property type="molecule type" value="Genomic_DNA"/>
</dbReference>
<dbReference type="EMBL" id="DQ008354">
    <property type="protein sequence ID" value="AAY57629.1"/>
    <property type="molecule type" value="Genomic_DNA"/>
</dbReference>
<dbReference type="EMBL" id="DQ008355">
    <property type="protein sequence ID" value="AAY57700.1"/>
    <property type="molecule type" value="Genomic_DNA"/>
</dbReference>
<dbReference type="IntAct" id="Q4JQW4">
    <property type="interactions" value="5"/>
</dbReference>
<dbReference type="MINT" id="Q4JQW4"/>
<dbReference type="Proteomes" id="UP000002603">
    <property type="component" value="Genome"/>
</dbReference>
<dbReference type="Proteomes" id="UP000008504">
    <property type="component" value="Genome"/>
</dbReference>
<dbReference type="Proteomes" id="UP000008505">
    <property type="component" value="Genome"/>
</dbReference>
<dbReference type="Proteomes" id="UP000008506">
    <property type="component" value="Genome"/>
</dbReference>
<dbReference type="GO" id="GO:0030430">
    <property type="term" value="C:host cell cytoplasm"/>
    <property type="evidence" value="ECO:0007669"/>
    <property type="project" value="UniProtKB-SubCell"/>
</dbReference>
<dbReference type="GO" id="GO:0042025">
    <property type="term" value="C:host cell nucleus"/>
    <property type="evidence" value="ECO:0007669"/>
    <property type="project" value="UniProtKB-SubCell"/>
</dbReference>
<dbReference type="GO" id="GO:0019033">
    <property type="term" value="C:viral tegument"/>
    <property type="evidence" value="ECO:0007669"/>
    <property type="project" value="UniProtKB-SubCell"/>
</dbReference>
<dbReference type="GO" id="GO:0003723">
    <property type="term" value="F:RNA binding"/>
    <property type="evidence" value="ECO:0007669"/>
    <property type="project" value="UniProtKB-KW"/>
</dbReference>
<dbReference type="GO" id="GO:0006355">
    <property type="term" value="P:regulation of DNA-templated transcription"/>
    <property type="evidence" value="ECO:0007669"/>
    <property type="project" value="InterPro"/>
</dbReference>
<dbReference type="InterPro" id="IPR005029">
    <property type="entry name" value="Herpes_UL47"/>
</dbReference>
<dbReference type="Pfam" id="PF03362">
    <property type="entry name" value="Herpes_UL47"/>
    <property type="match status" value="1"/>
</dbReference>